<keyword id="KW-0997">Cell inner membrane</keyword>
<keyword id="KW-1003">Cell membrane</keyword>
<keyword id="KW-0472">Membrane</keyword>
<keyword id="KW-1185">Reference proteome</keyword>
<keyword id="KW-0762">Sugar transport</keyword>
<keyword id="KW-0812">Transmembrane</keyword>
<keyword id="KW-1133">Transmembrane helix</keyword>
<keyword id="KW-0813">Transport</keyword>
<sequence length="296" mass="32467">MAMVQPKSQKWRLLATHLLMFTFIAMILFPLLMVITISLRPGNFATGSLIPENISWEHWKLALGYSVVSPDGRVTPPPFPVMLWLWNSVKVAFITAVGIVTLSTTCAYAFARMHFRGKSTLLKGMLIFQMFPAVLSLVALYALFDRLGEYVPFIGLNTHGGVIFAYLGGIALHVWTIKGYFETIDGSLEEAAALDGATPWQAFRMVLLPLSVPILAVVFILSFIGVITEVPVASLLLRDVNNYTLAVGMQQYLNPQNYLWGDFAAAAVLSALPITIVFLVAQRWLVSGLTAGGVKG</sequence>
<comment type="function">
    <text evidence="1">Part of the ABC transporter complex MalEFGK involved in maltose/maltodextrin import. Probably responsible for the translocation of the substrate across the membrane.</text>
</comment>
<comment type="subunit">
    <text evidence="1">The complex is composed of two ATP-binding proteins (MalK), two transmembrane proteins (MalG and MalF) and a solute-binding protein (MalE).</text>
</comment>
<comment type="subcellular location">
    <subcellularLocation>
        <location evidence="1">Cell inner membrane</location>
        <topology evidence="1">Multi-pass membrane protein</topology>
    </subcellularLocation>
</comment>
<comment type="similarity">
    <text evidence="4">Belongs to the binding-protein-dependent transport system permease family. MalFG subfamily.</text>
</comment>
<reference key="1">
    <citation type="journal article" date="2003" name="Nat. Biotechnol.">
        <title>The genome sequence of the entomopathogenic bacterium Photorhabdus luminescens.</title>
        <authorList>
            <person name="Duchaud E."/>
            <person name="Rusniok C."/>
            <person name="Frangeul L."/>
            <person name="Buchrieser C."/>
            <person name="Givaudan A."/>
            <person name="Taourit S."/>
            <person name="Bocs S."/>
            <person name="Boursaux-Eude C."/>
            <person name="Chandler M."/>
            <person name="Charles J.-F."/>
            <person name="Dassa E."/>
            <person name="Derose R."/>
            <person name="Derzelle S."/>
            <person name="Freyssinet G."/>
            <person name="Gaudriault S."/>
            <person name="Medigue C."/>
            <person name="Lanois A."/>
            <person name="Powell K."/>
            <person name="Siguier P."/>
            <person name="Vincent R."/>
            <person name="Wingate V."/>
            <person name="Zouine M."/>
            <person name="Glaser P."/>
            <person name="Boemare N."/>
            <person name="Danchin A."/>
            <person name="Kunst F."/>
        </authorList>
    </citation>
    <scope>NUCLEOTIDE SEQUENCE [LARGE SCALE GENOMIC DNA]</scope>
    <source>
        <strain>DSM 15139 / CIP 105565 / TT01</strain>
    </source>
</reference>
<evidence type="ECO:0000250" key="1">
    <source>
        <dbReference type="UniProtKB" id="P68183"/>
    </source>
</evidence>
<evidence type="ECO:0000255" key="2"/>
<evidence type="ECO:0000255" key="3">
    <source>
        <dbReference type="PROSITE-ProRule" id="PRU00441"/>
    </source>
</evidence>
<evidence type="ECO:0000305" key="4"/>
<organism>
    <name type="scientific">Photorhabdus laumondii subsp. laumondii (strain DSM 15139 / CIP 105565 / TT01)</name>
    <name type="common">Photorhabdus luminescens subsp. laumondii</name>
    <dbReference type="NCBI Taxonomy" id="243265"/>
    <lineage>
        <taxon>Bacteria</taxon>
        <taxon>Pseudomonadati</taxon>
        <taxon>Pseudomonadota</taxon>
        <taxon>Gammaproteobacteria</taxon>
        <taxon>Enterobacterales</taxon>
        <taxon>Morganellaceae</taxon>
        <taxon>Photorhabdus</taxon>
    </lineage>
</organism>
<accession>Q7N983</accession>
<proteinExistence type="inferred from homology"/>
<feature type="chain" id="PRO_0000060085" description="Maltose/maltodextrin transport system permease protein MalG">
    <location>
        <begin position="1"/>
        <end position="296"/>
    </location>
</feature>
<feature type="topological domain" description="Cytoplasmic" evidence="2">
    <location>
        <begin position="1"/>
        <end position="12"/>
    </location>
</feature>
<feature type="transmembrane region" description="Helical" evidence="3">
    <location>
        <begin position="13"/>
        <end position="35"/>
    </location>
</feature>
<feature type="topological domain" description="Periplasmic" evidence="2">
    <location>
        <begin position="36"/>
        <end position="88"/>
    </location>
</feature>
<feature type="transmembrane region" description="Helical" evidence="3">
    <location>
        <begin position="89"/>
        <end position="111"/>
    </location>
</feature>
<feature type="topological domain" description="Cytoplasmic" evidence="2">
    <location>
        <begin position="112"/>
        <end position="123"/>
    </location>
</feature>
<feature type="transmembrane region" description="Helical" evidence="3">
    <location>
        <begin position="124"/>
        <end position="143"/>
    </location>
</feature>
<feature type="topological domain" description="Periplasmic" evidence="2">
    <location>
        <begin position="144"/>
        <end position="152"/>
    </location>
</feature>
<feature type="transmembrane region" description="Helical" evidence="3">
    <location>
        <begin position="153"/>
        <end position="175"/>
    </location>
</feature>
<feature type="topological domain" description="Cytoplasmic" evidence="2">
    <location>
        <begin position="176"/>
        <end position="205"/>
    </location>
</feature>
<feature type="transmembrane region" description="Helical" evidence="3">
    <location>
        <begin position="206"/>
        <end position="228"/>
    </location>
</feature>
<feature type="topological domain" description="Periplasmic" evidence="2">
    <location>
        <begin position="229"/>
        <end position="257"/>
    </location>
</feature>
<feature type="transmembrane region" description="Helical" evidence="3">
    <location>
        <begin position="258"/>
        <end position="280"/>
    </location>
</feature>
<feature type="topological domain" description="Cytoplasmic" evidence="2">
    <location>
        <begin position="281"/>
        <end position="296"/>
    </location>
</feature>
<feature type="domain" description="ABC transmembrane type-1" evidence="3">
    <location>
        <begin position="85"/>
        <end position="281"/>
    </location>
</feature>
<dbReference type="EMBL" id="BX571860">
    <property type="protein sequence ID" value="CAE12755.1"/>
    <property type="molecule type" value="Genomic_DNA"/>
</dbReference>
<dbReference type="RefSeq" id="WP_011144846.1">
    <property type="nucleotide sequence ID" value="NC_005126.1"/>
</dbReference>
<dbReference type="SMR" id="Q7N983"/>
<dbReference type="STRING" id="243265.plu0460"/>
<dbReference type="GeneID" id="48846745"/>
<dbReference type="KEGG" id="plu:plu0460"/>
<dbReference type="eggNOG" id="COG3833">
    <property type="taxonomic scope" value="Bacteria"/>
</dbReference>
<dbReference type="HOGENOM" id="CLU_016047_1_2_6"/>
<dbReference type="OrthoDB" id="9794684at2"/>
<dbReference type="Proteomes" id="UP000002514">
    <property type="component" value="Chromosome"/>
</dbReference>
<dbReference type="GO" id="GO:0005886">
    <property type="term" value="C:plasma membrane"/>
    <property type="evidence" value="ECO:0007669"/>
    <property type="project" value="UniProtKB-SubCell"/>
</dbReference>
<dbReference type="GO" id="GO:0015423">
    <property type="term" value="F:ABC-type maltose transporter activity"/>
    <property type="evidence" value="ECO:0007669"/>
    <property type="project" value="TreeGrafter"/>
</dbReference>
<dbReference type="GO" id="GO:0042956">
    <property type="term" value="P:maltodextrin transmembrane transport"/>
    <property type="evidence" value="ECO:0007669"/>
    <property type="project" value="TreeGrafter"/>
</dbReference>
<dbReference type="CDD" id="cd06261">
    <property type="entry name" value="TM_PBP2"/>
    <property type="match status" value="1"/>
</dbReference>
<dbReference type="FunFam" id="1.10.3720.10:FF:000010">
    <property type="entry name" value="Maltose ABC transporter permease MalG"/>
    <property type="match status" value="1"/>
</dbReference>
<dbReference type="Gene3D" id="1.10.3720.10">
    <property type="entry name" value="MetI-like"/>
    <property type="match status" value="1"/>
</dbReference>
<dbReference type="InterPro" id="IPR050901">
    <property type="entry name" value="BP-dep_ABC_trans_perm"/>
</dbReference>
<dbReference type="InterPro" id="IPR000515">
    <property type="entry name" value="MetI-like"/>
</dbReference>
<dbReference type="InterPro" id="IPR035906">
    <property type="entry name" value="MetI-like_sf"/>
</dbReference>
<dbReference type="NCBIfam" id="NF008231">
    <property type="entry name" value="PRK10998.1"/>
    <property type="match status" value="1"/>
</dbReference>
<dbReference type="PANTHER" id="PTHR32243">
    <property type="entry name" value="MALTOSE TRANSPORT SYSTEM PERMEASE-RELATED"/>
    <property type="match status" value="1"/>
</dbReference>
<dbReference type="PANTHER" id="PTHR32243:SF50">
    <property type="entry name" value="MALTOSE_MALTODEXTRIN TRANSPORT SYSTEM PERMEASE PROTEIN MALG"/>
    <property type="match status" value="1"/>
</dbReference>
<dbReference type="Pfam" id="PF00528">
    <property type="entry name" value="BPD_transp_1"/>
    <property type="match status" value="1"/>
</dbReference>
<dbReference type="SUPFAM" id="SSF161098">
    <property type="entry name" value="MetI-like"/>
    <property type="match status" value="1"/>
</dbReference>
<dbReference type="PROSITE" id="PS50928">
    <property type="entry name" value="ABC_TM1"/>
    <property type="match status" value="1"/>
</dbReference>
<gene>
    <name type="primary">malG</name>
    <name type="ordered locus">plu0460</name>
</gene>
<name>MALG_PHOLL</name>
<protein>
    <recommendedName>
        <fullName evidence="1">Maltose/maltodextrin transport system permease protein MalG</fullName>
    </recommendedName>
</protein>